<evidence type="ECO:0000255" key="1">
    <source>
        <dbReference type="HAMAP-Rule" id="MF_00004"/>
    </source>
</evidence>
<protein>
    <recommendedName>
        <fullName evidence="1">Adenine phosphoribosyltransferase</fullName>
        <shortName evidence="1">APRT</shortName>
        <ecNumber evidence="1">2.4.2.7</ecNumber>
    </recommendedName>
</protein>
<reference key="1">
    <citation type="submission" date="2006-01" db="EMBL/GenBank/DDBJ databases">
        <title>Complete sequence of Rhodopseudomonas palustris HaA2.</title>
        <authorList>
            <consortium name="US DOE Joint Genome Institute"/>
            <person name="Copeland A."/>
            <person name="Lucas S."/>
            <person name="Lapidus A."/>
            <person name="Barry K."/>
            <person name="Detter J.C."/>
            <person name="Glavina T."/>
            <person name="Hammon N."/>
            <person name="Israni S."/>
            <person name="Pitluck S."/>
            <person name="Chain P."/>
            <person name="Malfatti S."/>
            <person name="Shin M."/>
            <person name="Vergez L."/>
            <person name="Schmutz J."/>
            <person name="Larimer F."/>
            <person name="Land M."/>
            <person name="Hauser L."/>
            <person name="Pelletier D.A."/>
            <person name="Kyrpides N."/>
            <person name="Anderson I."/>
            <person name="Oda Y."/>
            <person name="Harwood C.S."/>
            <person name="Richardson P."/>
        </authorList>
    </citation>
    <scope>NUCLEOTIDE SEQUENCE [LARGE SCALE GENOMIC DNA]</scope>
    <source>
        <strain>HaA2</strain>
    </source>
</reference>
<comment type="function">
    <text evidence="1">Catalyzes a salvage reaction resulting in the formation of AMP, that is energically less costly than de novo synthesis.</text>
</comment>
<comment type="catalytic activity">
    <reaction evidence="1">
        <text>AMP + diphosphate = 5-phospho-alpha-D-ribose 1-diphosphate + adenine</text>
        <dbReference type="Rhea" id="RHEA:16609"/>
        <dbReference type="ChEBI" id="CHEBI:16708"/>
        <dbReference type="ChEBI" id="CHEBI:33019"/>
        <dbReference type="ChEBI" id="CHEBI:58017"/>
        <dbReference type="ChEBI" id="CHEBI:456215"/>
        <dbReference type="EC" id="2.4.2.7"/>
    </reaction>
</comment>
<comment type="pathway">
    <text evidence="1">Purine metabolism; AMP biosynthesis via salvage pathway; AMP from adenine: step 1/1.</text>
</comment>
<comment type="subunit">
    <text evidence="1">Homodimer.</text>
</comment>
<comment type="subcellular location">
    <subcellularLocation>
        <location evidence="1">Cytoplasm</location>
    </subcellularLocation>
</comment>
<comment type="similarity">
    <text evidence="1">Belongs to the purine/pyrimidine phosphoribosyltransferase family.</text>
</comment>
<gene>
    <name evidence="1" type="primary">apt</name>
    <name type="ordered locus">RPB_4317</name>
</gene>
<accession>Q2IS06</accession>
<organism>
    <name type="scientific">Rhodopseudomonas palustris (strain HaA2)</name>
    <dbReference type="NCBI Taxonomy" id="316058"/>
    <lineage>
        <taxon>Bacteria</taxon>
        <taxon>Pseudomonadati</taxon>
        <taxon>Pseudomonadota</taxon>
        <taxon>Alphaproteobacteria</taxon>
        <taxon>Hyphomicrobiales</taxon>
        <taxon>Nitrobacteraceae</taxon>
        <taxon>Rhodopseudomonas</taxon>
    </lineage>
</organism>
<dbReference type="EC" id="2.4.2.7" evidence="1"/>
<dbReference type="EMBL" id="CP000250">
    <property type="protein sequence ID" value="ABD09004.1"/>
    <property type="molecule type" value="Genomic_DNA"/>
</dbReference>
<dbReference type="RefSeq" id="WP_011443188.1">
    <property type="nucleotide sequence ID" value="NC_007778.1"/>
</dbReference>
<dbReference type="SMR" id="Q2IS06"/>
<dbReference type="STRING" id="316058.RPB_4317"/>
<dbReference type="KEGG" id="rpb:RPB_4317"/>
<dbReference type="eggNOG" id="COG0503">
    <property type="taxonomic scope" value="Bacteria"/>
</dbReference>
<dbReference type="HOGENOM" id="CLU_063339_3_0_5"/>
<dbReference type="OrthoDB" id="9803963at2"/>
<dbReference type="UniPathway" id="UPA00588">
    <property type="reaction ID" value="UER00646"/>
</dbReference>
<dbReference type="Proteomes" id="UP000008809">
    <property type="component" value="Chromosome"/>
</dbReference>
<dbReference type="GO" id="GO:0005737">
    <property type="term" value="C:cytoplasm"/>
    <property type="evidence" value="ECO:0007669"/>
    <property type="project" value="UniProtKB-SubCell"/>
</dbReference>
<dbReference type="GO" id="GO:0003999">
    <property type="term" value="F:adenine phosphoribosyltransferase activity"/>
    <property type="evidence" value="ECO:0007669"/>
    <property type="project" value="UniProtKB-UniRule"/>
</dbReference>
<dbReference type="GO" id="GO:0006168">
    <property type="term" value="P:adenine salvage"/>
    <property type="evidence" value="ECO:0007669"/>
    <property type="project" value="InterPro"/>
</dbReference>
<dbReference type="GO" id="GO:0044209">
    <property type="term" value="P:AMP salvage"/>
    <property type="evidence" value="ECO:0007669"/>
    <property type="project" value="UniProtKB-UniRule"/>
</dbReference>
<dbReference type="GO" id="GO:0006166">
    <property type="term" value="P:purine ribonucleoside salvage"/>
    <property type="evidence" value="ECO:0007669"/>
    <property type="project" value="UniProtKB-KW"/>
</dbReference>
<dbReference type="CDD" id="cd06223">
    <property type="entry name" value="PRTases_typeI"/>
    <property type="match status" value="1"/>
</dbReference>
<dbReference type="FunFam" id="3.40.50.2020:FF:000021">
    <property type="entry name" value="Adenine phosphoribosyltransferase"/>
    <property type="match status" value="1"/>
</dbReference>
<dbReference type="Gene3D" id="3.40.50.2020">
    <property type="match status" value="1"/>
</dbReference>
<dbReference type="HAMAP" id="MF_00004">
    <property type="entry name" value="Aden_phosphoribosyltr"/>
    <property type="match status" value="1"/>
</dbReference>
<dbReference type="InterPro" id="IPR005764">
    <property type="entry name" value="Ade_phspho_trans"/>
</dbReference>
<dbReference type="InterPro" id="IPR050120">
    <property type="entry name" value="Adenine_PRTase"/>
</dbReference>
<dbReference type="InterPro" id="IPR000836">
    <property type="entry name" value="PRibTrfase_dom"/>
</dbReference>
<dbReference type="InterPro" id="IPR029057">
    <property type="entry name" value="PRTase-like"/>
</dbReference>
<dbReference type="NCBIfam" id="TIGR01090">
    <property type="entry name" value="apt"/>
    <property type="match status" value="1"/>
</dbReference>
<dbReference type="NCBIfam" id="NF002634">
    <property type="entry name" value="PRK02304.1-3"/>
    <property type="match status" value="1"/>
</dbReference>
<dbReference type="NCBIfam" id="NF002636">
    <property type="entry name" value="PRK02304.1-5"/>
    <property type="match status" value="1"/>
</dbReference>
<dbReference type="PANTHER" id="PTHR11776">
    <property type="entry name" value="ADENINE PHOSPHORIBOSYLTRANSFERASE"/>
    <property type="match status" value="1"/>
</dbReference>
<dbReference type="PANTHER" id="PTHR11776:SF7">
    <property type="entry name" value="PHOSPHORIBOSYLTRANSFERASE DOMAIN-CONTAINING PROTEIN"/>
    <property type="match status" value="1"/>
</dbReference>
<dbReference type="Pfam" id="PF00156">
    <property type="entry name" value="Pribosyltran"/>
    <property type="match status" value="1"/>
</dbReference>
<dbReference type="SUPFAM" id="SSF53271">
    <property type="entry name" value="PRTase-like"/>
    <property type="match status" value="1"/>
</dbReference>
<dbReference type="PROSITE" id="PS00103">
    <property type="entry name" value="PUR_PYR_PR_TRANSFER"/>
    <property type="match status" value="1"/>
</dbReference>
<keyword id="KW-0963">Cytoplasm</keyword>
<keyword id="KW-0328">Glycosyltransferase</keyword>
<keyword id="KW-0660">Purine salvage</keyword>
<keyword id="KW-1185">Reference proteome</keyword>
<keyword id="KW-0808">Transferase</keyword>
<feature type="chain" id="PRO_1000000332" description="Adenine phosphoribosyltransferase">
    <location>
        <begin position="1"/>
        <end position="181"/>
    </location>
</feature>
<name>APT_RHOP2</name>
<sequence length="181" mass="19424">MTPELAHDLKASVRTIPDYPKPGIMFRDITTLMGDPRSFRRAVDELVQPWAGSKIDKVAGIEARGFIIGGAIAHQVSSGFVPIRKKGKLPHTCVSMEYTLEYGTDHIEIHVDAITPGERVILVDDLIATGGTAEGAIKLLRQIGAEVVAACFIIDLPDLGGAAKVRSMGVPVRTLVEFGGH</sequence>
<proteinExistence type="inferred from homology"/>